<keyword id="KW-0560">Oxidoreductase</keyword>
<keyword id="KW-0663">Pyridoxal phosphate</keyword>
<keyword id="KW-1185">Reference proteome</keyword>
<evidence type="ECO:0000255" key="1">
    <source>
        <dbReference type="HAMAP-Rule" id="MF_00713"/>
    </source>
</evidence>
<dbReference type="EC" id="1.4.4.2" evidence="1"/>
<dbReference type="EMBL" id="CP001022">
    <property type="protein sequence ID" value="ACB60371.1"/>
    <property type="molecule type" value="Genomic_DNA"/>
</dbReference>
<dbReference type="RefSeq" id="WP_012369795.1">
    <property type="nucleotide sequence ID" value="NC_010556.1"/>
</dbReference>
<dbReference type="SMR" id="B1YLN8"/>
<dbReference type="STRING" id="262543.Exig_0891"/>
<dbReference type="KEGG" id="esi:Exig_0891"/>
<dbReference type="eggNOG" id="COG1003">
    <property type="taxonomic scope" value="Bacteria"/>
</dbReference>
<dbReference type="HOGENOM" id="CLU_004620_5_0_9"/>
<dbReference type="OrthoDB" id="9801272at2"/>
<dbReference type="Proteomes" id="UP000001681">
    <property type="component" value="Chromosome"/>
</dbReference>
<dbReference type="GO" id="GO:0005829">
    <property type="term" value="C:cytosol"/>
    <property type="evidence" value="ECO:0007669"/>
    <property type="project" value="TreeGrafter"/>
</dbReference>
<dbReference type="GO" id="GO:0005960">
    <property type="term" value="C:glycine cleavage complex"/>
    <property type="evidence" value="ECO:0007669"/>
    <property type="project" value="TreeGrafter"/>
</dbReference>
<dbReference type="GO" id="GO:0016594">
    <property type="term" value="F:glycine binding"/>
    <property type="evidence" value="ECO:0007669"/>
    <property type="project" value="TreeGrafter"/>
</dbReference>
<dbReference type="GO" id="GO:0004375">
    <property type="term" value="F:glycine dehydrogenase (decarboxylating) activity"/>
    <property type="evidence" value="ECO:0007669"/>
    <property type="project" value="UniProtKB-EC"/>
</dbReference>
<dbReference type="GO" id="GO:0030170">
    <property type="term" value="F:pyridoxal phosphate binding"/>
    <property type="evidence" value="ECO:0007669"/>
    <property type="project" value="TreeGrafter"/>
</dbReference>
<dbReference type="GO" id="GO:0019464">
    <property type="term" value="P:glycine decarboxylation via glycine cleavage system"/>
    <property type="evidence" value="ECO:0007669"/>
    <property type="project" value="UniProtKB-UniRule"/>
</dbReference>
<dbReference type="CDD" id="cd00613">
    <property type="entry name" value="GDC-P"/>
    <property type="match status" value="1"/>
</dbReference>
<dbReference type="FunFam" id="3.40.640.10:FF:000034">
    <property type="entry name" value="Probable glycine dehydrogenase (decarboxylating) subunit 2"/>
    <property type="match status" value="1"/>
</dbReference>
<dbReference type="FunFam" id="3.90.1150.10:FF:000014">
    <property type="entry name" value="Probable glycine dehydrogenase (decarboxylating) subunit 2"/>
    <property type="match status" value="1"/>
</dbReference>
<dbReference type="Gene3D" id="6.20.440.10">
    <property type="match status" value="1"/>
</dbReference>
<dbReference type="Gene3D" id="3.90.1150.10">
    <property type="entry name" value="Aspartate Aminotransferase, domain 1"/>
    <property type="match status" value="1"/>
</dbReference>
<dbReference type="Gene3D" id="3.40.640.10">
    <property type="entry name" value="Type I PLP-dependent aspartate aminotransferase-like (Major domain)"/>
    <property type="match status" value="1"/>
</dbReference>
<dbReference type="HAMAP" id="MF_00713">
    <property type="entry name" value="GcvPB"/>
    <property type="match status" value="1"/>
</dbReference>
<dbReference type="InterPro" id="IPR023012">
    <property type="entry name" value="GcvPB"/>
</dbReference>
<dbReference type="InterPro" id="IPR049316">
    <property type="entry name" value="GDC-P_C"/>
</dbReference>
<dbReference type="InterPro" id="IPR049315">
    <property type="entry name" value="GDC-P_N"/>
</dbReference>
<dbReference type="InterPro" id="IPR020581">
    <property type="entry name" value="GDC_P"/>
</dbReference>
<dbReference type="InterPro" id="IPR015424">
    <property type="entry name" value="PyrdxlP-dep_Trfase"/>
</dbReference>
<dbReference type="InterPro" id="IPR015421">
    <property type="entry name" value="PyrdxlP-dep_Trfase_major"/>
</dbReference>
<dbReference type="InterPro" id="IPR015422">
    <property type="entry name" value="PyrdxlP-dep_Trfase_small"/>
</dbReference>
<dbReference type="NCBIfam" id="NF003346">
    <property type="entry name" value="PRK04366.1"/>
    <property type="match status" value="1"/>
</dbReference>
<dbReference type="PANTHER" id="PTHR11773:SF1">
    <property type="entry name" value="GLYCINE DEHYDROGENASE (DECARBOXYLATING), MITOCHONDRIAL"/>
    <property type="match status" value="1"/>
</dbReference>
<dbReference type="PANTHER" id="PTHR11773">
    <property type="entry name" value="GLYCINE DEHYDROGENASE, DECARBOXYLATING"/>
    <property type="match status" value="1"/>
</dbReference>
<dbReference type="Pfam" id="PF21478">
    <property type="entry name" value="GcvP2_C"/>
    <property type="match status" value="1"/>
</dbReference>
<dbReference type="Pfam" id="PF02347">
    <property type="entry name" value="GDC-P"/>
    <property type="match status" value="1"/>
</dbReference>
<dbReference type="SUPFAM" id="SSF53383">
    <property type="entry name" value="PLP-dependent transferases"/>
    <property type="match status" value="1"/>
</dbReference>
<organism>
    <name type="scientific">Exiguobacterium sibiricum (strain DSM 17290 / CCUG 55495 / CIP 109462 / JCM 13490 / 255-15)</name>
    <dbReference type="NCBI Taxonomy" id="262543"/>
    <lineage>
        <taxon>Bacteria</taxon>
        <taxon>Bacillati</taxon>
        <taxon>Bacillota</taxon>
        <taxon>Bacilli</taxon>
        <taxon>Bacillales</taxon>
        <taxon>Bacillales Family XII. Incertae Sedis</taxon>
        <taxon>Exiguobacterium</taxon>
    </lineage>
</organism>
<reference key="1">
    <citation type="submission" date="2008-04" db="EMBL/GenBank/DDBJ databases">
        <title>Complete sequence of chromosome of Exiguobacterium sibiricum 255-15.</title>
        <authorList>
            <consortium name="US DOE Joint Genome Institute"/>
            <person name="Copeland A."/>
            <person name="Lucas S."/>
            <person name="Lapidus A."/>
            <person name="Glavina del Rio T."/>
            <person name="Dalin E."/>
            <person name="Tice H."/>
            <person name="Bruce D."/>
            <person name="Goodwin L."/>
            <person name="Pitluck S."/>
            <person name="Kiss H."/>
            <person name="Chertkov O."/>
            <person name="Monk C."/>
            <person name="Brettin T."/>
            <person name="Detter J.C."/>
            <person name="Han C."/>
            <person name="Kuske C.R."/>
            <person name="Schmutz J."/>
            <person name="Larimer F."/>
            <person name="Land M."/>
            <person name="Hauser L."/>
            <person name="Kyrpides N."/>
            <person name="Mikhailova N."/>
            <person name="Vishnivetskaya T."/>
            <person name="Rodrigues D.F."/>
            <person name="Gilichinsky D."/>
            <person name="Tiedje J."/>
            <person name="Richardson P."/>
        </authorList>
    </citation>
    <scope>NUCLEOTIDE SEQUENCE [LARGE SCALE GENOMIC DNA]</scope>
    <source>
        <strain>DSM 17290 / CCUG 55495 / CIP 109462 / JCM 13490 / 255-15</strain>
    </source>
</reference>
<proteinExistence type="inferred from homology"/>
<feature type="chain" id="PRO_1000132500" description="Probable glycine dehydrogenase (decarboxylating) subunit 2">
    <location>
        <begin position="1"/>
        <end position="492"/>
    </location>
</feature>
<feature type="modified residue" description="N6-(pyridoxal phosphate)lysine" evidence="1">
    <location>
        <position position="274"/>
    </location>
</feature>
<sequence>MHKTSEQTLIFEISKAGRVAYSLPLPTVDEVAAEELLPAHLLRQEDVELPEVSELDLVRHYTALSNRNHGVDSGFYPLGSCTMKYNPKINEDMARLPGFAHIHPLQPVESVQGALGLMYDLQEKLAVITGMDEVTLQPAAGAHGEWTGLMLIKAYHHARGDFKRTKVLVPDSAHGTNPASASVAGFDTVTVLSDERGLVDLADLKSKVGEDTAALMLTNPNTLGLFESDIVEIAKAVHEAGGKLYYDGANSNAIMGIARPGDMGFDVVHLNLHKTFTGPHGGGGPGSGPVGVKKDLIPYLPKPIVAKTAEGFVLDYDRPESIGRVKPFYGNFGINVRAYSYIRTMGGAGLARVSKEAVLNANYMLARLKGAYDAPYDVYCKHEFVLSGRRQKALGVRTLDIAKRLLDFGYHPPTIYFPLNVEECIMIEPTETESKETLDDFCDAMLQIAKEVEETPDVVLNAPHTTVVKRMDETLAARKPILRYQPKQEVHV</sequence>
<accession>B1YLN8</accession>
<gene>
    <name evidence="1" type="primary">gcvPB</name>
    <name type="ordered locus">Exig_0891</name>
</gene>
<name>GCSPB_EXIS2</name>
<comment type="function">
    <text evidence="1">The glycine cleavage system catalyzes the degradation of glycine. The P protein binds the alpha-amino group of glycine through its pyridoxal phosphate cofactor; CO(2) is released and the remaining methylamine moiety is then transferred to the lipoamide cofactor of the H protein.</text>
</comment>
<comment type="catalytic activity">
    <reaction evidence="1">
        <text>N(6)-[(R)-lipoyl]-L-lysyl-[glycine-cleavage complex H protein] + glycine + H(+) = N(6)-[(R)-S(8)-aminomethyldihydrolipoyl]-L-lysyl-[glycine-cleavage complex H protein] + CO2</text>
        <dbReference type="Rhea" id="RHEA:24304"/>
        <dbReference type="Rhea" id="RHEA-COMP:10494"/>
        <dbReference type="Rhea" id="RHEA-COMP:10495"/>
        <dbReference type="ChEBI" id="CHEBI:15378"/>
        <dbReference type="ChEBI" id="CHEBI:16526"/>
        <dbReference type="ChEBI" id="CHEBI:57305"/>
        <dbReference type="ChEBI" id="CHEBI:83099"/>
        <dbReference type="ChEBI" id="CHEBI:83143"/>
        <dbReference type="EC" id="1.4.4.2"/>
    </reaction>
</comment>
<comment type="cofactor">
    <cofactor evidence="1">
        <name>pyridoxal 5'-phosphate</name>
        <dbReference type="ChEBI" id="CHEBI:597326"/>
    </cofactor>
</comment>
<comment type="subunit">
    <text evidence="1">The glycine cleavage system is composed of four proteins: P, T, L and H. In this organism, the P 'protein' is a heterodimer of two subunits.</text>
</comment>
<comment type="similarity">
    <text evidence="1">Belongs to the GcvP family. C-terminal subunit subfamily.</text>
</comment>
<protein>
    <recommendedName>
        <fullName evidence="1">Probable glycine dehydrogenase (decarboxylating) subunit 2</fullName>
        <ecNumber evidence="1">1.4.4.2</ecNumber>
    </recommendedName>
    <alternativeName>
        <fullName evidence="1">Glycine cleavage system P-protein subunit 2</fullName>
    </alternativeName>
    <alternativeName>
        <fullName evidence="1">Glycine decarboxylase subunit 2</fullName>
    </alternativeName>
    <alternativeName>
        <fullName evidence="1">Glycine dehydrogenase (aminomethyl-transferring) subunit 2</fullName>
    </alternativeName>
</protein>